<evidence type="ECO:0000255" key="1">
    <source>
        <dbReference type="HAMAP-Rule" id="MF_00159"/>
    </source>
</evidence>
<keyword id="KW-0004">4Fe-4S</keyword>
<keyword id="KW-0408">Iron</keyword>
<keyword id="KW-0411">Iron-sulfur</keyword>
<keyword id="KW-0414">Isoprene biosynthesis</keyword>
<keyword id="KW-0479">Metal-binding</keyword>
<keyword id="KW-0560">Oxidoreductase</keyword>
<dbReference type="EC" id="1.17.7.3" evidence="1"/>
<dbReference type="EMBL" id="AM260522">
    <property type="protein sequence ID" value="CAJ99534.1"/>
    <property type="molecule type" value="Genomic_DNA"/>
</dbReference>
<dbReference type="RefSeq" id="WP_011577647.1">
    <property type="nucleotide sequence ID" value="NC_008229.1"/>
</dbReference>
<dbReference type="SMR" id="Q17XU2"/>
<dbReference type="STRING" id="382638.Hac_0735"/>
<dbReference type="GeneID" id="31758175"/>
<dbReference type="KEGG" id="hac:Hac_0735"/>
<dbReference type="eggNOG" id="COG0821">
    <property type="taxonomic scope" value="Bacteria"/>
</dbReference>
<dbReference type="HOGENOM" id="CLU_042258_0_0_7"/>
<dbReference type="OrthoDB" id="9803214at2"/>
<dbReference type="BioCyc" id="HACI382638:HAC_RS03210-MONOMER"/>
<dbReference type="UniPathway" id="UPA00056">
    <property type="reaction ID" value="UER00096"/>
</dbReference>
<dbReference type="Proteomes" id="UP000000775">
    <property type="component" value="Chromosome"/>
</dbReference>
<dbReference type="GO" id="GO:0051539">
    <property type="term" value="F:4 iron, 4 sulfur cluster binding"/>
    <property type="evidence" value="ECO:0007669"/>
    <property type="project" value="UniProtKB-UniRule"/>
</dbReference>
<dbReference type="GO" id="GO:0046429">
    <property type="term" value="F:4-hydroxy-3-methylbut-2-en-1-yl diphosphate synthase activity (ferredoxin)"/>
    <property type="evidence" value="ECO:0007669"/>
    <property type="project" value="UniProtKB-UniRule"/>
</dbReference>
<dbReference type="GO" id="GO:0141197">
    <property type="term" value="F:4-hydroxy-3-methylbut-2-enyl-diphosphate synthase activity (flavodoxin)"/>
    <property type="evidence" value="ECO:0007669"/>
    <property type="project" value="UniProtKB-EC"/>
</dbReference>
<dbReference type="GO" id="GO:0005506">
    <property type="term" value="F:iron ion binding"/>
    <property type="evidence" value="ECO:0007669"/>
    <property type="project" value="InterPro"/>
</dbReference>
<dbReference type="GO" id="GO:0019288">
    <property type="term" value="P:isopentenyl diphosphate biosynthetic process, methylerythritol 4-phosphate pathway"/>
    <property type="evidence" value="ECO:0007669"/>
    <property type="project" value="UniProtKB-UniRule"/>
</dbReference>
<dbReference type="GO" id="GO:0016114">
    <property type="term" value="P:terpenoid biosynthetic process"/>
    <property type="evidence" value="ECO:0007669"/>
    <property type="project" value="InterPro"/>
</dbReference>
<dbReference type="FunFam" id="3.20.20.20:FF:000001">
    <property type="entry name" value="4-hydroxy-3-methylbut-2-en-1-yl diphosphate synthase (flavodoxin)"/>
    <property type="match status" value="1"/>
</dbReference>
<dbReference type="Gene3D" id="3.20.20.20">
    <property type="entry name" value="Dihydropteroate synthase-like"/>
    <property type="match status" value="1"/>
</dbReference>
<dbReference type="Gene3D" id="3.30.413.10">
    <property type="entry name" value="Sulfite Reductase Hemoprotein, domain 1"/>
    <property type="match status" value="1"/>
</dbReference>
<dbReference type="HAMAP" id="MF_00159">
    <property type="entry name" value="IspG"/>
    <property type="match status" value="1"/>
</dbReference>
<dbReference type="InterPro" id="IPR011005">
    <property type="entry name" value="Dihydropteroate_synth-like_sf"/>
</dbReference>
<dbReference type="InterPro" id="IPR036849">
    <property type="entry name" value="Enolase-like_C_sf"/>
</dbReference>
<dbReference type="InterPro" id="IPR016425">
    <property type="entry name" value="IspG_bac"/>
</dbReference>
<dbReference type="InterPro" id="IPR004588">
    <property type="entry name" value="IspG_bac-typ"/>
</dbReference>
<dbReference type="InterPro" id="IPR045854">
    <property type="entry name" value="NO2/SO3_Rdtase_4Fe4S_sf"/>
</dbReference>
<dbReference type="NCBIfam" id="TIGR00612">
    <property type="entry name" value="ispG_gcpE"/>
    <property type="match status" value="1"/>
</dbReference>
<dbReference type="NCBIfam" id="NF001540">
    <property type="entry name" value="PRK00366.1"/>
    <property type="match status" value="1"/>
</dbReference>
<dbReference type="PANTHER" id="PTHR30454">
    <property type="entry name" value="4-HYDROXY-3-METHYLBUT-2-EN-1-YL DIPHOSPHATE SYNTHASE"/>
    <property type="match status" value="1"/>
</dbReference>
<dbReference type="PANTHER" id="PTHR30454:SF0">
    <property type="entry name" value="4-HYDROXY-3-METHYLBUT-2-EN-1-YL DIPHOSPHATE SYNTHASE (FERREDOXIN), CHLOROPLASTIC"/>
    <property type="match status" value="1"/>
</dbReference>
<dbReference type="Pfam" id="PF04551">
    <property type="entry name" value="GcpE"/>
    <property type="match status" value="1"/>
</dbReference>
<dbReference type="PIRSF" id="PIRSF004640">
    <property type="entry name" value="IspG"/>
    <property type="match status" value="1"/>
</dbReference>
<dbReference type="SUPFAM" id="SSF51604">
    <property type="entry name" value="Enolase C-terminal domain-like"/>
    <property type="match status" value="1"/>
</dbReference>
<dbReference type="SUPFAM" id="SSF56014">
    <property type="entry name" value="Nitrite and sulphite reductase 4Fe-4S domain-like"/>
    <property type="match status" value="1"/>
</dbReference>
<organism>
    <name type="scientific">Helicobacter acinonychis (strain Sheeba)</name>
    <dbReference type="NCBI Taxonomy" id="382638"/>
    <lineage>
        <taxon>Bacteria</taxon>
        <taxon>Pseudomonadati</taxon>
        <taxon>Campylobacterota</taxon>
        <taxon>Epsilonproteobacteria</taxon>
        <taxon>Campylobacterales</taxon>
        <taxon>Helicobacteraceae</taxon>
        <taxon>Helicobacter</taxon>
    </lineage>
</organism>
<protein>
    <recommendedName>
        <fullName evidence="1">4-hydroxy-3-methylbut-2-en-1-yl diphosphate synthase (flavodoxin)</fullName>
        <ecNumber evidence="1">1.17.7.3</ecNumber>
    </recommendedName>
    <alternativeName>
        <fullName evidence="1">1-hydroxy-2-methyl-2-(E)-butenyl 4-diphosphate synthase</fullName>
    </alternativeName>
</protein>
<accession>Q17XU2</accession>
<feature type="chain" id="PRO_1000011474" description="4-hydroxy-3-methylbut-2-en-1-yl diphosphate synthase (flavodoxin)">
    <location>
        <begin position="1"/>
        <end position="358"/>
    </location>
</feature>
<feature type="binding site" evidence="1">
    <location>
        <position position="264"/>
    </location>
    <ligand>
        <name>[4Fe-4S] cluster</name>
        <dbReference type="ChEBI" id="CHEBI:49883"/>
    </ligand>
</feature>
<feature type="binding site" evidence="1">
    <location>
        <position position="267"/>
    </location>
    <ligand>
        <name>[4Fe-4S] cluster</name>
        <dbReference type="ChEBI" id="CHEBI:49883"/>
    </ligand>
</feature>
<feature type="binding site" evidence="1">
    <location>
        <position position="299"/>
    </location>
    <ligand>
        <name>[4Fe-4S] cluster</name>
        <dbReference type="ChEBI" id="CHEBI:49883"/>
    </ligand>
</feature>
<feature type="binding site" evidence="1">
    <location>
        <position position="306"/>
    </location>
    <ligand>
        <name>[4Fe-4S] cluster</name>
        <dbReference type="ChEBI" id="CHEBI:49883"/>
    </ligand>
</feature>
<gene>
    <name evidence="1" type="primary">ispG</name>
    <name type="ordered locus">Hac_0735</name>
</gene>
<sequence>MLENRVKTKQIFIGGVAIGGGAPISTQSMTFSKTADIQSTKNQIDRLKLAGADLVRVAVSNEKDALALKELKKVSPLPLIADIHFHYKFALIAAQSVDAIRINPGNIGSKDKIKAVVDACKEKNIPIRIGVNAGSLEKQFDQKYGPTVKGMVESALYNAKLLEDLDFTNFKISLKASDVIRTIEAYRMLRPLVIYPFHLGVTEAGNLFSSSIKSAMALGGLLMEGIGDTMRISITGELENEIKVARAILRYSGRLKEGINLISCPTCGRIEANLVDMAGKVEKRLSHIKTPLDISVMGCVVNALGEAKHADMAIAFGNRSGLIIKEGKVIHKLAEKDLFETFVTEVENLAKEREKTLN</sequence>
<proteinExistence type="inferred from homology"/>
<reference key="1">
    <citation type="journal article" date="2006" name="PLoS Genet.">
        <title>Who ate whom? Adaptive Helicobacter genomic changes that accompanied a host jump from early humans to large felines.</title>
        <authorList>
            <person name="Eppinger M."/>
            <person name="Baar C."/>
            <person name="Linz B."/>
            <person name="Raddatz G."/>
            <person name="Lanz C."/>
            <person name="Keller H."/>
            <person name="Morelli G."/>
            <person name="Gressmann H."/>
            <person name="Achtman M."/>
            <person name="Schuster S.C."/>
        </authorList>
    </citation>
    <scope>NUCLEOTIDE SEQUENCE [LARGE SCALE GENOMIC DNA]</scope>
    <source>
        <strain>Sheeba</strain>
    </source>
</reference>
<name>ISPG_HELAH</name>
<comment type="function">
    <text evidence="1">Converts 2C-methyl-D-erythritol 2,4-cyclodiphosphate (ME-2,4cPP) into 1-hydroxy-2-methyl-2-(E)-butenyl 4-diphosphate.</text>
</comment>
<comment type="catalytic activity">
    <reaction evidence="1">
        <text>(2E)-4-hydroxy-3-methylbut-2-enyl diphosphate + oxidized [flavodoxin] + H2O + 2 H(+) = 2-C-methyl-D-erythritol 2,4-cyclic diphosphate + reduced [flavodoxin]</text>
        <dbReference type="Rhea" id="RHEA:43604"/>
        <dbReference type="Rhea" id="RHEA-COMP:10622"/>
        <dbReference type="Rhea" id="RHEA-COMP:10623"/>
        <dbReference type="ChEBI" id="CHEBI:15377"/>
        <dbReference type="ChEBI" id="CHEBI:15378"/>
        <dbReference type="ChEBI" id="CHEBI:57618"/>
        <dbReference type="ChEBI" id="CHEBI:58210"/>
        <dbReference type="ChEBI" id="CHEBI:58483"/>
        <dbReference type="ChEBI" id="CHEBI:128753"/>
        <dbReference type="EC" id="1.17.7.3"/>
    </reaction>
</comment>
<comment type="cofactor">
    <cofactor evidence="1">
        <name>[4Fe-4S] cluster</name>
        <dbReference type="ChEBI" id="CHEBI:49883"/>
    </cofactor>
    <text evidence="1">Binds 1 [4Fe-4S] cluster.</text>
</comment>
<comment type="pathway">
    <text evidence="1">Isoprenoid biosynthesis; isopentenyl diphosphate biosynthesis via DXP pathway; isopentenyl diphosphate from 1-deoxy-D-xylulose 5-phosphate: step 5/6.</text>
</comment>
<comment type="similarity">
    <text evidence="1">Belongs to the IspG family.</text>
</comment>